<sequence>MIAELLSSALGLLLYLNTLGADFCYDDSRAIKTNQDLLPETPWNHIFFNDFWGTLLTHSGSHKSYRPLCTLSFRLNYLFGGLDPWNYHLVNVLLHSAVTGLFTNLCKALFGSGCWTLIAGLLFASHPIHTEAVSGIVGRADVGSGLFFLLSLLCYMKHCSTRGYSLSSWCWILCAGFWAACSMLWKEQGVTVLAVSAVYDVFVFHKLKMNQIISVVFKEKNVSFFFSVGLLFAWGVILLGARFYWMGNTPPSFSNSDNPAADCEVLLTRTLTFFYLPTKNLWLLFCPDTLSFDWSMDAVPLIKTITDWRNIHTVAFYILLILLAYSSLKGSAIKRDCNGKVFMNGKQNTNGHSCQSDLEHKNAEQNPVIASKLENGVKHHNSHEMQLPSTENIVVLALSLLIVPFVPASNLFFYVGFVIAERVLYIPSMGFCLLVTVGARALYIKAQKNILKNLLFYATAALIVFYGLKTVVRNGDWKNEEMLYRSGIKVNPAKAWGNLGNVLKSQSKIDEAENAYRNALYYRSNMADMLYNLGLLLQENSKFSEALHYYKLAIGSRPTLASGYLNTGIILMNQGRTEEARRTFLKCSEIPDENLKDPNAHKSSVTSCLYNLGKLYHEQGQYEDALIVYKEAIQKMPRQFSPQSLYNMMGEAYMRLNVVSEAEHWYTESLKSKPDHIPAHLTYGKLLTLTGRKNEAERYFLKAIQLDPNKGNCYMHYGQFLLEEGRILEAAEMAKKAAELDSSEFDVVFNAAHMLRQASLNEEAEKFYKLAAGLRQNYPAALMNLGAILHLNGKLEEAEYNYLRALQLKPDDAITQSNLRKLWNIMEKQGLKNSKT</sequence>
<comment type="function">
    <text evidence="1">Transfers mannosyl residues to the hydroxyl group of serine or threonine residues.</text>
</comment>
<comment type="catalytic activity">
    <reaction evidence="1">
        <text>a di-trans,poly-cis-dolichyl beta-D-mannosyl phosphate + L-seryl-[protein] = 3-O-(alpha-D-mannosyl)-L-seryl-[protein] + a di-trans,poly-cis-dolichyl phosphate + H(+)</text>
        <dbReference type="Rhea" id="RHEA:17377"/>
        <dbReference type="Rhea" id="RHEA-COMP:9863"/>
        <dbReference type="Rhea" id="RHEA-COMP:13546"/>
        <dbReference type="Rhea" id="RHEA-COMP:19498"/>
        <dbReference type="Rhea" id="RHEA-COMP:19501"/>
        <dbReference type="ChEBI" id="CHEBI:15378"/>
        <dbReference type="ChEBI" id="CHEBI:29999"/>
        <dbReference type="ChEBI" id="CHEBI:57683"/>
        <dbReference type="ChEBI" id="CHEBI:58211"/>
        <dbReference type="ChEBI" id="CHEBI:137321"/>
        <dbReference type="EC" id="2.4.1.109"/>
    </reaction>
</comment>
<comment type="catalytic activity">
    <reaction evidence="1">
        <text>a di-trans,poly-cis-dolichyl beta-D-mannosyl phosphate + L-threonyl-[protein] = 3-O-(alpha-D-mannosyl)-L-threonyl-[protein] + a di-trans,poly-cis-dolichyl phosphate + H(+)</text>
        <dbReference type="Rhea" id="RHEA:53396"/>
        <dbReference type="Rhea" id="RHEA-COMP:11060"/>
        <dbReference type="Rhea" id="RHEA-COMP:13547"/>
        <dbReference type="Rhea" id="RHEA-COMP:19498"/>
        <dbReference type="Rhea" id="RHEA-COMP:19501"/>
        <dbReference type="ChEBI" id="CHEBI:15378"/>
        <dbReference type="ChEBI" id="CHEBI:30013"/>
        <dbReference type="ChEBI" id="CHEBI:57683"/>
        <dbReference type="ChEBI" id="CHEBI:58211"/>
        <dbReference type="ChEBI" id="CHEBI:137323"/>
        <dbReference type="EC" id="2.4.1.109"/>
    </reaction>
</comment>
<comment type="pathway">
    <text evidence="1">Protein modification; protein glycosylation.</text>
</comment>
<comment type="subcellular location">
    <subcellularLocation>
        <location evidence="4">Membrane</location>
        <topology evidence="4">Multi-pass membrane protein</topology>
    </subcellularLocation>
    <subcellularLocation>
        <location evidence="1">Endoplasmic reticulum</location>
    </subcellularLocation>
</comment>
<comment type="similarity">
    <text evidence="4">Belongs to the TMTC family.</text>
</comment>
<accession>Q6DCD5</accession>
<gene>
    <name type="primary">tmtc2</name>
</gene>
<evidence type="ECO:0000250" key="1">
    <source>
        <dbReference type="UniProtKB" id="Q8N394"/>
    </source>
</evidence>
<evidence type="ECO:0000255" key="2"/>
<evidence type="ECO:0000255" key="3">
    <source>
        <dbReference type="PROSITE-ProRule" id="PRU00339"/>
    </source>
</evidence>
<evidence type="ECO:0000305" key="4"/>
<proteinExistence type="evidence at transcript level"/>
<protein>
    <recommendedName>
        <fullName evidence="4">Protein O-mannosyl-transferase tmtc2</fullName>
        <ecNumber evidence="1">2.4.1.109</ecNumber>
    </recommendedName>
    <alternativeName>
        <fullName evidence="1">Transmembrane O-mannosyltransferase targeting cadherins 2</fullName>
    </alternativeName>
    <alternativeName>
        <fullName evidence="1">Transmembrane and tetratricopeptide repeat-containing 2</fullName>
    </alternativeName>
</protein>
<keyword id="KW-0256">Endoplasmic reticulum</keyword>
<keyword id="KW-0472">Membrane</keyword>
<keyword id="KW-1185">Reference proteome</keyword>
<keyword id="KW-0677">Repeat</keyword>
<keyword id="KW-0802">TPR repeat</keyword>
<keyword id="KW-0808">Transferase</keyword>
<keyword id="KW-0812">Transmembrane</keyword>
<keyword id="KW-1133">Transmembrane helix</keyword>
<reference key="1">
    <citation type="submission" date="2004-07" db="EMBL/GenBank/DDBJ databases">
        <authorList>
            <consortium name="NIH - Xenopus Gene Collection (XGC) project"/>
        </authorList>
    </citation>
    <scope>NUCLEOTIDE SEQUENCE [LARGE SCALE MRNA]</scope>
    <source>
        <tissue>Oocyte</tissue>
    </source>
</reference>
<name>TMTC2_XENLA</name>
<organism>
    <name type="scientific">Xenopus laevis</name>
    <name type="common">African clawed frog</name>
    <dbReference type="NCBI Taxonomy" id="8355"/>
    <lineage>
        <taxon>Eukaryota</taxon>
        <taxon>Metazoa</taxon>
        <taxon>Chordata</taxon>
        <taxon>Craniata</taxon>
        <taxon>Vertebrata</taxon>
        <taxon>Euteleostomi</taxon>
        <taxon>Amphibia</taxon>
        <taxon>Batrachia</taxon>
        <taxon>Anura</taxon>
        <taxon>Pipoidea</taxon>
        <taxon>Pipidae</taxon>
        <taxon>Xenopodinae</taxon>
        <taxon>Xenopus</taxon>
        <taxon>Xenopus</taxon>
    </lineage>
</organism>
<dbReference type="EC" id="2.4.1.109" evidence="1"/>
<dbReference type="EMBL" id="BC078113">
    <property type="protein sequence ID" value="AAH78113.1"/>
    <property type="molecule type" value="mRNA"/>
</dbReference>
<dbReference type="RefSeq" id="NP_001087168.1">
    <property type="nucleotide sequence ID" value="NM_001093699.1"/>
</dbReference>
<dbReference type="SMR" id="Q6DCD5"/>
<dbReference type="GlyCosmos" id="Q6DCD5">
    <property type="glycosylation" value="1 site, No reported glycans"/>
</dbReference>
<dbReference type="DNASU" id="447057"/>
<dbReference type="GeneID" id="447057"/>
<dbReference type="KEGG" id="xla:447057"/>
<dbReference type="AGR" id="Xenbase:XB-GENE-948543"/>
<dbReference type="CTD" id="447057"/>
<dbReference type="Xenbase" id="XB-GENE-948543">
    <property type="gene designation" value="tmtc2.S"/>
</dbReference>
<dbReference type="OrthoDB" id="1658288at2759"/>
<dbReference type="UniPathway" id="UPA00378"/>
<dbReference type="Proteomes" id="UP000186698">
    <property type="component" value="Chromosome 3S"/>
</dbReference>
<dbReference type="Bgee" id="447057">
    <property type="expression patterns" value="Expressed in blastula and 13 other cell types or tissues"/>
</dbReference>
<dbReference type="GO" id="GO:0005789">
    <property type="term" value="C:endoplasmic reticulum membrane"/>
    <property type="evidence" value="ECO:0000318"/>
    <property type="project" value="GO_Central"/>
</dbReference>
<dbReference type="GO" id="GO:0004169">
    <property type="term" value="F:dolichyl-phosphate-mannose-protein mannosyltransferase activity"/>
    <property type="evidence" value="ECO:0000250"/>
    <property type="project" value="UniProtKB"/>
</dbReference>
<dbReference type="GO" id="GO:0000030">
    <property type="term" value="F:mannosyltransferase activity"/>
    <property type="evidence" value="ECO:0000318"/>
    <property type="project" value="GO_Central"/>
</dbReference>
<dbReference type="GO" id="GO:0035269">
    <property type="term" value="P:protein O-linked mannosylation"/>
    <property type="evidence" value="ECO:0000250"/>
    <property type="project" value="UniProtKB"/>
</dbReference>
<dbReference type="FunFam" id="1.25.40.10:FF:000130">
    <property type="entry name" value="Transmembrane and tetratricopeptide repeat containing 2"/>
    <property type="match status" value="1"/>
</dbReference>
<dbReference type="FunFam" id="1.25.40.10:FF:000153">
    <property type="entry name" value="Transmembrane and tetratricopeptide repeat containing 2"/>
    <property type="match status" value="1"/>
</dbReference>
<dbReference type="FunFam" id="1.25.40.10:FF:000190">
    <property type="entry name" value="Transmembrane and TPR repeat-containing protein 2"/>
    <property type="match status" value="1"/>
</dbReference>
<dbReference type="Gene3D" id="1.25.40.10">
    <property type="entry name" value="Tetratricopeptide repeat domain"/>
    <property type="match status" value="4"/>
</dbReference>
<dbReference type="InterPro" id="IPR013618">
    <property type="entry name" value="TMTC_DUF1736"/>
</dbReference>
<dbReference type="InterPro" id="IPR052384">
    <property type="entry name" value="TMTC_O-mannosyltransferase"/>
</dbReference>
<dbReference type="InterPro" id="IPR011990">
    <property type="entry name" value="TPR-like_helical_dom_sf"/>
</dbReference>
<dbReference type="InterPro" id="IPR019734">
    <property type="entry name" value="TPR_rpt"/>
</dbReference>
<dbReference type="PANTHER" id="PTHR44216">
    <property type="entry name" value="PROTEIN O-MANNOSYL-TRANSFERASE TMTC2"/>
    <property type="match status" value="1"/>
</dbReference>
<dbReference type="PANTHER" id="PTHR44216:SF3">
    <property type="entry name" value="PROTEIN O-MANNOSYL-TRANSFERASE TMTC2"/>
    <property type="match status" value="1"/>
</dbReference>
<dbReference type="Pfam" id="PF08409">
    <property type="entry name" value="TMTC_DUF1736"/>
    <property type="match status" value="1"/>
</dbReference>
<dbReference type="Pfam" id="PF00515">
    <property type="entry name" value="TPR_1"/>
    <property type="match status" value="1"/>
</dbReference>
<dbReference type="Pfam" id="PF13424">
    <property type="entry name" value="TPR_12"/>
    <property type="match status" value="1"/>
</dbReference>
<dbReference type="Pfam" id="PF13432">
    <property type="entry name" value="TPR_16"/>
    <property type="match status" value="1"/>
</dbReference>
<dbReference type="Pfam" id="PF13181">
    <property type="entry name" value="TPR_8"/>
    <property type="match status" value="1"/>
</dbReference>
<dbReference type="SMART" id="SM00028">
    <property type="entry name" value="TPR"/>
    <property type="match status" value="9"/>
</dbReference>
<dbReference type="SUPFAM" id="SSF48452">
    <property type="entry name" value="TPR-like"/>
    <property type="match status" value="2"/>
</dbReference>
<dbReference type="PROSITE" id="PS50005">
    <property type="entry name" value="TPR"/>
    <property type="match status" value="8"/>
</dbReference>
<dbReference type="PROSITE" id="PS50293">
    <property type="entry name" value="TPR_REGION"/>
    <property type="match status" value="5"/>
</dbReference>
<feature type="chain" id="PRO_0000280292" description="Protein O-mannosyl-transferase tmtc2">
    <location>
        <begin position="1"/>
        <end position="836"/>
    </location>
</feature>
<feature type="transmembrane region" description="Helical" evidence="2">
    <location>
        <begin position="1"/>
        <end position="21"/>
    </location>
</feature>
<feature type="topological domain" description="Extracellular" evidence="4">
    <location>
        <begin position="22"/>
        <end position="77"/>
    </location>
</feature>
<feature type="transmembrane region" description="Helical" evidence="2">
    <location>
        <begin position="78"/>
        <end position="98"/>
    </location>
</feature>
<feature type="topological domain" description="Cytoplasmic" evidence="4">
    <location>
        <begin position="99"/>
        <end position="107"/>
    </location>
</feature>
<feature type="transmembrane region" description="Helical" evidence="2">
    <location>
        <begin position="108"/>
        <end position="128"/>
    </location>
</feature>
<feature type="topological domain" description="Extracellular" evidence="4">
    <location>
        <begin position="129"/>
        <end position="132"/>
    </location>
</feature>
<feature type="transmembrane region" description="Helical" evidence="2">
    <location>
        <begin position="133"/>
        <end position="153"/>
    </location>
</feature>
<feature type="topological domain" description="Cytoplasmic" evidence="4">
    <location>
        <begin position="154"/>
        <end position="164"/>
    </location>
</feature>
<feature type="transmembrane region" description="Helical" evidence="2">
    <location>
        <begin position="165"/>
        <end position="185"/>
    </location>
</feature>
<feature type="topological domain" description="Extracellular" evidence="4">
    <location>
        <begin position="186"/>
        <end position="188"/>
    </location>
</feature>
<feature type="transmembrane region" description="Helical" evidence="2">
    <location>
        <begin position="189"/>
        <end position="209"/>
    </location>
</feature>
<feature type="topological domain" description="Cytoplasmic" evidence="4">
    <location>
        <begin position="210"/>
        <end position="220"/>
    </location>
</feature>
<feature type="transmembrane region" description="Helical" evidence="2">
    <location>
        <begin position="221"/>
        <end position="241"/>
    </location>
</feature>
<feature type="topological domain" description="Extracellular" evidence="4">
    <location>
        <begin position="242"/>
        <end position="312"/>
    </location>
</feature>
<feature type="transmembrane region" description="Helical" evidence="2">
    <location>
        <begin position="313"/>
        <end position="333"/>
    </location>
</feature>
<feature type="topological domain" description="Cytoplasmic" evidence="4">
    <location>
        <begin position="334"/>
        <end position="392"/>
    </location>
</feature>
<feature type="transmembrane region" description="Helical" evidence="2">
    <location>
        <begin position="393"/>
        <end position="413"/>
    </location>
</feature>
<feature type="topological domain" description="Extracellular" evidence="4">
    <location>
        <position position="414"/>
    </location>
</feature>
<feature type="transmembrane region" description="Helical" evidence="2">
    <location>
        <begin position="415"/>
        <end position="435"/>
    </location>
</feature>
<feature type="topological domain" description="Cytoplasmic" evidence="4">
    <location>
        <begin position="436"/>
        <end position="449"/>
    </location>
</feature>
<feature type="transmembrane region" description="Helical" evidence="2">
    <location>
        <begin position="450"/>
        <end position="470"/>
    </location>
</feature>
<feature type="topological domain" description="Extracellular" evidence="4">
    <location>
        <begin position="471"/>
        <end position="836"/>
    </location>
</feature>
<feature type="repeat" description="TPR 1" evidence="3">
    <location>
        <begin position="493"/>
        <end position="526"/>
    </location>
</feature>
<feature type="repeat" description="TPR 2" evidence="3">
    <location>
        <begin position="527"/>
        <end position="560"/>
    </location>
</feature>
<feature type="repeat" description="TPR 3" evidence="3">
    <location>
        <begin position="561"/>
        <end position="594"/>
    </location>
</feature>
<feature type="repeat" description="TPR 4" evidence="3">
    <location>
        <begin position="606"/>
        <end position="639"/>
    </location>
</feature>
<feature type="repeat" description="TPR 5" evidence="3">
    <location>
        <begin position="643"/>
        <end position="676"/>
    </location>
</feature>
<feature type="repeat" description="TPR 6" evidence="3">
    <location>
        <begin position="677"/>
        <end position="710"/>
    </location>
</feature>
<feature type="repeat" description="TPR 7" evidence="3">
    <location>
        <begin position="711"/>
        <end position="744"/>
    </location>
</feature>
<feature type="repeat" description="TPR 8" evidence="2">
    <location>
        <begin position="745"/>
        <end position="778"/>
    </location>
</feature>
<feature type="repeat" description="TPR 8" evidence="3">
    <location>
        <begin position="779"/>
        <end position="812"/>
    </location>
</feature>